<keyword id="KW-0217">Developmental protein</keyword>
<keyword id="KW-0238">DNA-binding</keyword>
<keyword id="KW-0371">Homeobox</keyword>
<keyword id="KW-0539">Nucleus</keyword>
<keyword id="KW-1185">Reference proteome</keyword>
<name>NKX25_CHICK</name>
<reference key="1">
    <citation type="journal article" date="1995" name="Development">
        <title>Induction of avian cardiac myogenesis by anterior endoderm.</title>
        <authorList>
            <person name="Schultheiss T.M."/>
            <person name="Xydas S."/>
            <person name="Lassar A.B."/>
        </authorList>
    </citation>
    <scope>NUCLEOTIDE SEQUENCE [MRNA]</scope>
</reference>
<evidence type="ECO:0000250" key="1">
    <source>
        <dbReference type="UniProtKB" id="P42582"/>
    </source>
</evidence>
<evidence type="ECO:0000250" key="2">
    <source>
        <dbReference type="UniProtKB" id="P52952"/>
    </source>
</evidence>
<evidence type="ECO:0000255" key="3">
    <source>
        <dbReference type="PROSITE-ProRule" id="PRU00108"/>
    </source>
</evidence>
<evidence type="ECO:0000256" key="4">
    <source>
        <dbReference type="SAM" id="MobiDB-lite"/>
    </source>
</evidence>
<evidence type="ECO:0000305" key="5"/>
<proteinExistence type="evidence at transcript level"/>
<feature type="chain" id="PRO_0000048940" description="Homeobox protein Nkx-2.5">
    <location>
        <begin position="1"/>
        <end position="294"/>
    </location>
</feature>
<feature type="DNA-binding region" description="Homeobox" evidence="2 3">
    <location>
        <begin position="119"/>
        <end position="178"/>
    </location>
</feature>
<feature type="region of interest" description="Disordered" evidence="4">
    <location>
        <begin position="48"/>
        <end position="69"/>
    </location>
</feature>
<feature type="region of interest" description="Disordered" evidence="4">
    <location>
        <begin position="102"/>
        <end position="122"/>
    </location>
</feature>
<feature type="compositionally biased region" description="Pro residues" evidence="4">
    <location>
        <begin position="52"/>
        <end position="69"/>
    </location>
</feature>
<feature type="compositionally biased region" description="Basic and acidic residues" evidence="4">
    <location>
        <begin position="102"/>
        <end position="114"/>
    </location>
</feature>
<dbReference type="EMBL" id="X91838">
    <property type="protein sequence ID" value="CAA62955.1"/>
    <property type="molecule type" value="mRNA"/>
</dbReference>
<dbReference type="RefSeq" id="NP_990495.1">
    <property type="nucleotide sequence ID" value="NM_205164.1"/>
</dbReference>
<dbReference type="SMR" id="Q90788"/>
<dbReference type="FunCoup" id="Q90788">
    <property type="interactions" value="124"/>
</dbReference>
<dbReference type="STRING" id="9031.ENSGALP00000004542"/>
<dbReference type="PaxDb" id="9031-ENSGALP00000004542"/>
<dbReference type="Ensembl" id="ENSGALT00010022201.1">
    <property type="protein sequence ID" value="ENSGALP00010012749.1"/>
    <property type="gene ID" value="ENSGALG00010009324.1"/>
</dbReference>
<dbReference type="GeneID" id="396073"/>
<dbReference type="KEGG" id="gga:396073"/>
<dbReference type="CTD" id="1482"/>
<dbReference type="VEuPathDB" id="HostDB:geneid_396073"/>
<dbReference type="eggNOG" id="KOG0842">
    <property type="taxonomic scope" value="Eukaryota"/>
</dbReference>
<dbReference type="GeneTree" id="ENSGT00940000158996"/>
<dbReference type="InParanoid" id="Q90788"/>
<dbReference type="OMA" id="CNASYSC"/>
<dbReference type="OrthoDB" id="6159439at2759"/>
<dbReference type="PhylomeDB" id="Q90788"/>
<dbReference type="PRO" id="PR:Q90788"/>
<dbReference type="Proteomes" id="UP000000539">
    <property type="component" value="Chromosome 13"/>
</dbReference>
<dbReference type="GO" id="GO:0005829">
    <property type="term" value="C:cytosol"/>
    <property type="evidence" value="ECO:0007669"/>
    <property type="project" value="Ensembl"/>
</dbReference>
<dbReference type="GO" id="GO:1990664">
    <property type="term" value="C:Nkx-2.5 complex"/>
    <property type="evidence" value="ECO:0007669"/>
    <property type="project" value="Ensembl"/>
</dbReference>
<dbReference type="GO" id="GO:0005654">
    <property type="term" value="C:nucleoplasm"/>
    <property type="evidence" value="ECO:0007669"/>
    <property type="project" value="Ensembl"/>
</dbReference>
<dbReference type="GO" id="GO:0005634">
    <property type="term" value="C:nucleus"/>
    <property type="evidence" value="ECO:0000314"/>
    <property type="project" value="AgBase"/>
</dbReference>
<dbReference type="GO" id="GO:0032991">
    <property type="term" value="C:protein-containing complex"/>
    <property type="evidence" value="ECO:0000250"/>
    <property type="project" value="UniProtKB"/>
</dbReference>
<dbReference type="GO" id="GO:0032993">
    <property type="term" value="C:protein-DNA complex"/>
    <property type="evidence" value="ECO:0000250"/>
    <property type="project" value="UniProtKB"/>
</dbReference>
<dbReference type="GO" id="GO:0003682">
    <property type="term" value="F:chromatin binding"/>
    <property type="evidence" value="ECO:0007669"/>
    <property type="project" value="Ensembl"/>
</dbReference>
<dbReference type="GO" id="GO:0001228">
    <property type="term" value="F:DNA-binding transcription activator activity, RNA polymerase II-specific"/>
    <property type="evidence" value="ECO:0007669"/>
    <property type="project" value="Ensembl"/>
</dbReference>
<dbReference type="GO" id="GO:0000981">
    <property type="term" value="F:DNA-binding transcription factor activity, RNA polymerase II-specific"/>
    <property type="evidence" value="ECO:0000318"/>
    <property type="project" value="GO_Central"/>
</dbReference>
<dbReference type="GO" id="GO:0042803">
    <property type="term" value="F:protein homodimerization activity"/>
    <property type="evidence" value="ECO:0007669"/>
    <property type="project" value="Ensembl"/>
</dbReference>
<dbReference type="GO" id="GO:0000978">
    <property type="term" value="F:RNA polymerase II cis-regulatory region sequence-specific DNA binding"/>
    <property type="evidence" value="ECO:0000250"/>
    <property type="project" value="UniProtKB"/>
</dbReference>
<dbReference type="GO" id="GO:0061629">
    <property type="term" value="F:RNA polymerase II-specific DNA-binding transcription factor binding"/>
    <property type="evidence" value="ECO:0007669"/>
    <property type="project" value="Ensembl"/>
</dbReference>
<dbReference type="GO" id="GO:0007512">
    <property type="term" value="P:adult heart development"/>
    <property type="evidence" value="ECO:0007669"/>
    <property type="project" value="Ensembl"/>
</dbReference>
<dbReference type="GO" id="GO:0003278">
    <property type="term" value="P:apoptotic process involved in heart morphogenesis"/>
    <property type="evidence" value="ECO:0007669"/>
    <property type="project" value="Ensembl"/>
</dbReference>
<dbReference type="GO" id="GO:0003228">
    <property type="term" value="P:atrial cardiac muscle tissue development"/>
    <property type="evidence" value="ECO:0007669"/>
    <property type="project" value="Ensembl"/>
</dbReference>
<dbReference type="GO" id="GO:0060413">
    <property type="term" value="P:atrial septum morphogenesis"/>
    <property type="evidence" value="ECO:0007669"/>
    <property type="project" value="Ensembl"/>
</dbReference>
<dbReference type="GO" id="GO:0060928">
    <property type="term" value="P:atrioventricular node cell development"/>
    <property type="evidence" value="ECO:0007669"/>
    <property type="project" value="Ensembl"/>
</dbReference>
<dbReference type="GO" id="GO:0060929">
    <property type="term" value="P:atrioventricular node cell fate commitment"/>
    <property type="evidence" value="ECO:0007669"/>
    <property type="project" value="Ensembl"/>
</dbReference>
<dbReference type="GO" id="GO:0003166">
    <property type="term" value="P:bundle of His development"/>
    <property type="evidence" value="ECO:0007669"/>
    <property type="project" value="Ensembl"/>
</dbReference>
<dbReference type="GO" id="GO:0060038">
    <property type="term" value="P:cardiac muscle cell proliferation"/>
    <property type="evidence" value="ECO:0007669"/>
    <property type="project" value="Ensembl"/>
</dbReference>
<dbReference type="GO" id="GO:0060048">
    <property type="term" value="P:cardiac muscle contraction"/>
    <property type="evidence" value="ECO:0007669"/>
    <property type="project" value="Ensembl"/>
</dbReference>
<dbReference type="GO" id="GO:0003211">
    <property type="term" value="P:cardiac ventricle formation"/>
    <property type="evidence" value="ECO:0007669"/>
    <property type="project" value="Ensembl"/>
</dbReference>
<dbReference type="GO" id="GO:0030154">
    <property type="term" value="P:cell differentiation"/>
    <property type="evidence" value="ECO:0000318"/>
    <property type="project" value="GO_Central"/>
</dbReference>
<dbReference type="GO" id="GO:0060971">
    <property type="term" value="P:embryonic heart tube left/right pattern formation"/>
    <property type="evidence" value="ECO:0007669"/>
    <property type="project" value="Ensembl"/>
</dbReference>
<dbReference type="GO" id="GO:1904019">
    <property type="term" value="P:epithelial cell apoptotic process"/>
    <property type="evidence" value="ECO:0007669"/>
    <property type="project" value="Ensembl"/>
</dbReference>
<dbReference type="GO" id="GO:0030855">
    <property type="term" value="P:epithelial cell differentiation"/>
    <property type="evidence" value="ECO:0007669"/>
    <property type="project" value="Ensembl"/>
</dbReference>
<dbReference type="GO" id="GO:0050673">
    <property type="term" value="P:epithelial cell proliferation"/>
    <property type="evidence" value="ECO:0007669"/>
    <property type="project" value="Ensembl"/>
</dbReference>
<dbReference type="GO" id="GO:0001947">
    <property type="term" value="P:heart looping"/>
    <property type="evidence" value="ECO:0007669"/>
    <property type="project" value="Ensembl"/>
</dbReference>
<dbReference type="GO" id="GO:0060347">
    <property type="term" value="P:heart trabecula formation"/>
    <property type="evidence" value="ECO:0007669"/>
    <property type="project" value="Ensembl"/>
</dbReference>
<dbReference type="GO" id="GO:0030097">
    <property type="term" value="P:hemopoiesis"/>
    <property type="evidence" value="ECO:0007669"/>
    <property type="project" value="Ensembl"/>
</dbReference>
<dbReference type="GO" id="GO:0090090">
    <property type="term" value="P:negative regulation of canonical Wnt signaling pathway"/>
    <property type="evidence" value="ECO:0007669"/>
    <property type="project" value="Ensembl"/>
</dbReference>
<dbReference type="GO" id="GO:0010667">
    <property type="term" value="P:negative regulation of cardiac muscle cell apoptotic process"/>
    <property type="evidence" value="ECO:0007669"/>
    <property type="project" value="Ensembl"/>
</dbReference>
<dbReference type="GO" id="GO:1904036">
    <property type="term" value="P:negative regulation of epithelial cell apoptotic process"/>
    <property type="evidence" value="ECO:0007669"/>
    <property type="project" value="Ensembl"/>
</dbReference>
<dbReference type="GO" id="GO:0010832">
    <property type="term" value="P:negative regulation of myotube differentiation"/>
    <property type="evidence" value="ECO:0007669"/>
    <property type="project" value="Ensembl"/>
</dbReference>
<dbReference type="GO" id="GO:0000122">
    <property type="term" value="P:negative regulation of transcription by RNA polymerase II"/>
    <property type="evidence" value="ECO:0007669"/>
    <property type="project" value="Ensembl"/>
</dbReference>
<dbReference type="GO" id="GO:0003148">
    <property type="term" value="P:outflow tract septum morphogenesis"/>
    <property type="evidence" value="ECO:0007669"/>
    <property type="project" value="Ensembl"/>
</dbReference>
<dbReference type="GO" id="GO:0060037">
    <property type="term" value="P:pharyngeal system development"/>
    <property type="evidence" value="ECO:0007669"/>
    <property type="project" value="Ensembl"/>
</dbReference>
<dbReference type="GO" id="GO:0051891">
    <property type="term" value="P:positive regulation of cardioblast differentiation"/>
    <property type="evidence" value="ECO:0007669"/>
    <property type="project" value="Ensembl"/>
</dbReference>
<dbReference type="GO" id="GO:0050679">
    <property type="term" value="P:positive regulation of epithelial cell proliferation"/>
    <property type="evidence" value="ECO:0007669"/>
    <property type="project" value="Ensembl"/>
</dbReference>
<dbReference type="GO" id="GO:0010628">
    <property type="term" value="P:positive regulation of gene expression"/>
    <property type="evidence" value="ECO:0007669"/>
    <property type="project" value="Ensembl"/>
</dbReference>
<dbReference type="GO" id="GO:0045823">
    <property type="term" value="P:positive regulation of heart contraction"/>
    <property type="evidence" value="ECO:0007669"/>
    <property type="project" value="Ensembl"/>
</dbReference>
<dbReference type="GO" id="GO:0045666">
    <property type="term" value="P:positive regulation of neuron differentiation"/>
    <property type="evidence" value="ECO:0007669"/>
    <property type="project" value="Ensembl"/>
</dbReference>
<dbReference type="GO" id="GO:0010765">
    <property type="term" value="P:positive regulation of sodium ion transport"/>
    <property type="evidence" value="ECO:0007669"/>
    <property type="project" value="Ensembl"/>
</dbReference>
<dbReference type="GO" id="GO:0060261">
    <property type="term" value="P:positive regulation of transcription initiation by RNA polymerase II"/>
    <property type="evidence" value="ECO:0007669"/>
    <property type="project" value="Ensembl"/>
</dbReference>
<dbReference type="GO" id="GO:0003342">
    <property type="term" value="P:proepicardium development"/>
    <property type="evidence" value="ECO:0007669"/>
    <property type="project" value="Ensembl"/>
</dbReference>
<dbReference type="GO" id="GO:0003350">
    <property type="term" value="P:pulmonary myocardium development"/>
    <property type="evidence" value="ECO:0007669"/>
    <property type="project" value="Ensembl"/>
</dbReference>
<dbReference type="GO" id="GO:0003168">
    <property type="term" value="P:Purkinje myocyte differentiation"/>
    <property type="evidence" value="ECO:0007669"/>
    <property type="project" value="Ensembl"/>
</dbReference>
<dbReference type="GO" id="GO:1903779">
    <property type="term" value="P:regulation of cardiac conduction"/>
    <property type="evidence" value="ECO:0007669"/>
    <property type="project" value="Ensembl"/>
</dbReference>
<dbReference type="GO" id="GO:0060043">
    <property type="term" value="P:regulation of cardiac muscle cell proliferation"/>
    <property type="evidence" value="ECO:0007669"/>
    <property type="project" value="Ensembl"/>
</dbReference>
<dbReference type="GO" id="GO:0055117">
    <property type="term" value="P:regulation of cardiac muscle contraction"/>
    <property type="evidence" value="ECO:0007669"/>
    <property type="project" value="Ensembl"/>
</dbReference>
<dbReference type="GO" id="GO:0006357">
    <property type="term" value="P:regulation of transcription by RNA polymerase II"/>
    <property type="evidence" value="ECO:0000318"/>
    <property type="project" value="GO_Central"/>
</dbReference>
<dbReference type="GO" id="GO:0071772">
    <property type="term" value="P:response to BMP"/>
    <property type="evidence" value="ECO:0000314"/>
    <property type="project" value="AgBase"/>
</dbReference>
<dbReference type="GO" id="GO:0003221">
    <property type="term" value="P:right ventricular cardiac muscle tissue morphogenesis"/>
    <property type="evidence" value="ECO:0007669"/>
    <property type="project" value="Ensembl"/>
</dbReference>
<dbReference type="GO" id="GO:0003285">
    <property type="term" value="P:septum secundum development"/>
    <property type="evidence" value="ECO:0007669"/>
    <property type="project" value="Ensembl"/>
</dbReference>
<dbReference type="GO" id="GO:0048536">
    <property type="term" value="P:spleen development"/>
    <property type="evidence" value="ECO:0007669"/>
    <property type="project" value="Ensembl"/>
</dbReference>
<dbReference type="GO" id="GO:0030878">
    <property type="term" value="P:thyroid gland development"/>
    <property type="evidence" value="ECO:0007669"/>
    <property type="project" value="Ensembl"/>
</dbReference>
<dbReference type="GO" id="GO:0006366">
    <property type="term" value="P:transcription by RNA polymerase II"/>
    <property type="evidence" value="ECO:0007669"/>
    <property type="project" value="Ensembl"/>
</dbReference>
<dbReference type="GO" id="GO:0001570">
    <property type="term" value="P:vasculogenesis"/>
    <property type="evidence" value="ECO:0007669"/>
    <property type="project" value="Ensembl"/>
</dbReference>
<dbReference type="GO" id="GO:0055005">
    <property type="term" value="P:ventricular cardiac myofibril assembly"/>
    <property type="evidence" value="ECO:0007669"/>
    <property type="project" value="Ensembl"/>
</dbReference>
<dbReference type="GO" id="GO:0060412">
    <property type="term" value="P:ventricular septum morphogenesis"/>
    <property type="evidence" value="ECO:0007669"/>
    <property type="project" value="Ensembl"/>
</dbReference>
<dbReference type="GO" id="GO:0003222">
    <property type="term" value="P:ventricular trabecula myocardium morphogenesis"/>
    <property type="evidence" value="ECO:0007669"/>
    <property type="project" value="Ensembl"/>
</dbReference>
<dbReference type="CDD" id="cd00086">
    <property type="entry name" value="homeodomain"/>
    <property type="match status" value="1"/>
</dbReference>
<dbReference type="FunFam" id="1.10.10.60:FF:000078">
    <property type="entry name" value="NK2 homeobox 3"/>
    <property type="match status" value="1"/>
</dbReference>
<dbReference type="Gene3D" id="1.10.10.60">
    <property type="entry name" value="Homeodomain-like"/>
    <property type="match status" value="1"/>
</dbReference>
<dbReference type="InterPro" id="IPR001356">
    <property type="entry name" value="HD"/>
</dbReference>
<dbReference type="InterPro" id="IPR020479">
    <property type="entry name" value="HD_metazoa"/>
</dbReference>
<dbReference type="InterPro" id="IPR017970">
    <property type="entry name" value="Homeobox_CS"/>
</dbReference>
<dbReference type="InterPro" id="IPR050394">
    <property type="entry name" value="Homeobox_NK-like"/>
</dbReference>
<dbReference type="InterPro" id="IPR009057">
    <property type="entry name" value="Homeodomain-like_sf"/>
</dbReference>
<dbReference type="PANTHER" id="PTHR24340">
    <property type="entry name" value="HOMEOBOX PROTEIN NKX"/>
    <property type="match status" value="1"/>
</dbReference>
<dbReference type="PANTHER" id="PTHR24340:SF28">
    <property type="entry name" value="HOMEOBOX PROTEIN NKX-2.5"/>
    <property type="match status" value="1"/>
</dbReference>
<dbReference type="Pfam" id="PF00046">
    <property type="entry name" value="Homeodomain"/>
    <property type="match status" value="1"/>
</dbReference>
<dbReference type="PRINTS" id="PR00024">
    <property type="entry name" value="HOMEOBOX"/>
</dbReference>
<dbReference type="SMART" id="SM00389">
    <property type="entry name" value="HOX"/>
    <property type="match status" value="1"/>
</dbReference>
<dbReference type="SUPFAM" id="SSF46689">
    <property type="entry name" value="Homeodomain-like"/>
    <property type="match status" value="1"/>
</dbReference>
<dbReference type="PROSITE" id="PS00027">
    <property type="entry name" value="HOMEOBOX_1"/>
    <property type="match status" value="1"/>
</dbReference>
<dbReference type="PROSITE" id="PS50071">
    <property type="entry name" value="HOMEOBOX_2"/>
    <property type="match status" value="1"/>
</dbReference>
<organism>
    <name type="scientific">Gallus gallus</name>
    <name type="common">Chicken</name>
    <dbReference type="NCBI Taxonomy" id="9031"/>
    <lineage>
        <taxon>Eukaryota</taxon>
        <taxon>Metazoa</taxon>
        <taxon>Chordata</taxon>
        <taxon>Craniata</taxon>
        <taxon>Vertebrata</taxon>
        <taxon>Euteleostomi</taxon>
        <taxon>Archelosauria</taxon>
        <taxon>Archosauria</taxon>
        <taxon>Dinosauria</taxon>
        <taxon>Saurischia</taxon>
        <taxon>Theropoda</taxon>
        <taxon>Coelurosauria</taxon>
        <taxon>Aves</taxon>
        <taxon>Neognathae</taxon>
        <taxon>Galloanserae</taxon>
        <taxon>Galliformes</taxon>
        <taxon>Phasianidae</taxon>
        <taxon>Phasianinae</taxon>
        <taxon>Gallus</taxon>
    </lineage>
</organism>
<gene>
    <name type="primary">NKX-2.5</name>
    <name type="synonym">NKX2E</name>
</gene>
<sequence length="294" mass="33073">MFPSPVTTTPFSVKDILNLEQQQQGGLAPMELSSPSCMLATFKQEAFGSEPPALPELPEPPPAKPPAAFPGPYYVKSYGEMDTAKDSKADKKELCALHKSLEQEKRELEDPERPRQRKRRKPRVLFSQAQVYELERRFKQQKYLSAPERDHLANVLKLTSTQVKIWFQNRRYKCKRQRQDQTLEMVGIPPPRRIAVPVLVRDGKPCLGESSPYSSPYNVSINPYSYNAYPAYPNYNSPACNANYNCSYPAVQPVQPSAAGNNFMNFSVGDLNSVQPPIPQGNAGISTLHGIRAW</sequence>
<protein>
    <recommendedName>
        <fullName>Homeobox protein Nkx-2.5</fullName>
        <shortName>cNKx-2.5</shortName>
    </recommendedName>
    <alternativeName>
        <fullName>Homeobox protein NK-2 homolog E</fullName>
    </alternativeName>
</protein>
<comment type="function">
    <text evidence="1 2">Transcription factor required for the development of the heart and the spleen. Implicated in commitment to and/or differentiation of the myocardial lineage. Binds to the core DNA motif of promoter.</text>
</comment>
<comment type="subunit">
    <text evidence="2">Homodimer (via the homeobox); binds DNA as homodimer.</text>
</comment>
<comment type="subcellular location">
    <subcellularLocation>
        <location evidence="1">Nucleus</location>
    </subcellularLocation>
</comment>
<comment type="domain">
    <text evidence="2">The homeobox domain binds to double-stranded DNA.</text>
</comment>
<comment type="similarity">
    <text evidence="5">Belongs to the NK-2 homeobox family.</text>
</comment>
<accession>Q90788</accession>